<comment type="catalytic activity">
    <reaction evidence="1">
        <text>tRNA(Lys) + L-lysine + ATP = L-lysyl-tRNA(Lys) + AMP + diphosphate</text>
        <dbReference type="Rhea" id="RHEA:20792"/>
        <dbReference type="Rhea" id="RHEA-COMP:9696"/>
        <dbReference type="Rhea" id="RHEA-COMP:9697"/>
        <dbReference type="ChEBI" id="CHEBI:30616"/>
        <dbReference type="ChEBI" id="CHEBI:32551"/>
        <dbReference type="ChEBI" id="CHEBI:33019"/>
        <dbReference type="ChEBI" id="CHEBI:78442"/>
        <dbReference type="ChEBI" id="CHEBI:78529"/>
        <dbReference type="ChEBI" id="CHEBI:456215"/>
        <dbReference type="EC" id="6.1.1.6"/>
    </reaction>
</comment>
<comment type="subcellular location">
    <subcellularLocation>
        <location evidence="1">Cytoplasm</location>
    </subcellularLocation>
</comment>
<comment type="similarity">
    <text evidence="1">Belongs to the class-I aminoacyl-tRNA synthetase family.</text>
</comment>
<proteinExistence type="inferred from homology"/>
<keyword id="KW-0030">Aminoacyl-tRNA synthetase</keyword>
<keyword id="KW-0067">ATP-binding</keyword>
<keyword id="KW-0963">Cytoplasm</keyword>
<keyword id="KW-0436">Ligase</keyword>
<keyword id="KW-0547">Nucleotide-binding</keyword>
<keyword id="KW-0648">Protein biosynthesis</keyword>
<keyword id="KW-1185">Reference proteome</keyword>
<evidence type="ECO:0000255" key="1">
    <source>
        <dbReference type="HAMAP-Rule" id="MF_00177"/>
    </source>
</evidence>
<accession>Q5UXX4</accession>
<dbReference type="EC" id="6.1.1.6" evidence="1"/>
<dbReference type="EMBL" id="AY596297">
    <property type="protein sequence ID" value="AAV47879.1"/>
    <property type="molecule type" value="Genomic_DNA"/>
</dbReference>
<dbReference type="RefSeq" id="WP_011224652.1">
    <property type="nucleotide sequence ID" value="NC_006396.1"/>
</dbReference>
<dbReference type="SMR" id="Q5UXX4"/>
<dbReference type="STRING" id="272569.rrnAC3173"/>
<dbReference type="PaxDb" id="272569-rrnAC3173"/>
<dbReference type="EnsemblBacteria" id="AAV47879">
    <property type="protein sequence ID" value="AAV47879"/>
    <property type="gene ID" value="rrnAC3173"/>
</dbReference>
<dbReference type="GeneID" id="40153980"/>
<dbReference type="KEGG" id="hma:rrnAC3173"/>
<dbReference type="PATRIC" id="fig|272569.17.peg.3713"/>
<dbReference type="eggNOG" id="arCOG00485">
    <property type="taxonomic scope" value="Archaea"/>
</dbReference>
<dbReference type="HOGENOM" id="CLU_025562_1_0_2"/>
<dbReference type="Proteomes" id="UP000001169">
    <property type="component" value="Chromosome I"/>
</dbReference>
<dbReference type="GO" id="GO:0005737">
    <property type="term" value="C:cytoplasm"/>
    <property type="evidence" value="ECO:0007669"/>
    <property type="project" value="UniProtKB-SubCell"/>
</dbReference>
<dbReference type="GO" id="GO:0005524">
    <property type="term" value="F:ATP binding"/>
    <property type="evidence" value="ECO:0007669"/>
    <property type="project" value="UniProtKB-UniRule"/>
</dbReference>
<dbReference type="GO" id="GO:0004824">
    <property type="term" value="F:lysine-tRNA ligase activity"/>
    <property type="evidence" value="ECO:0007669"/>
    <property type="project" value="UniProtKB-UniRule"/>
</dbReference>
<dbReference type="GO" id="GO:0000049">
    <property type="term" value="F:tRNA binding"/>
    <property type="evidence" value="ECO:0007669"/>
    <property type="project" value="InterPro"/>
</dbReference>
<dbReference type="GO" id="GO:0006430">
    <property type="term" value="P:lysyl-tRNA aminoacylation"/>
    <property type="evidence" value="ECO:0007669"/>
    <property type="project" value="UniProtKB-UniRule"/>
</dbReference>
<dbReference type="Gene3D" id="1.10.10.350">
    <property type="match status" value="1"/>
</dbReference>
<dbReference type="Gene3D" id="1.10.10.770">
    <property type="match status" value="1"/>
</dbReference>
<dbReference type="Gene3D" id="3.40.50.620">
    <property type="entry name" value="HUPs"/>
    <property type="match status" value="1"/>
</dbReference>
<dbReference type="Gene3D" id="6.10.20.10">
    <property type="entry name" value="Lysine tRNA ligase, stem contact fold domain"/>
    <property type="match status" value="1"/>
</dbReference>
<dbReference type="HAMAP" id="MF_00177">
    <property type="entry name" value="Lys_tRNA_synth_class1"/>
    <property type="match status" value="1"/>
</dbReference>
<dbReference type="InterPro" id="IPR020751">
    <property type="entry name" value="aa-tRNA-synth_I_codon-bd_sub2"/>
</dbReference>
<dbReference type="InterPro" id="IPR001412">
    <property type="entry name" value="aa-tRNA-synth_I_CS"/>
</dbReference>
<dbReference type="InterPro" id="IPR008925">
    <property type="entry name" value="aa_tRNA-synth_I_cd-bd_sf"/>
</dbReference>
<dbReference type="InterPro" id="IPR002904">
    <property type="entry name" value="Lys-tRNA-ligase"/>
</dbReference>
<dbReference type="InterPro" id="IPR042078">
    <property type="entry name" value="Lys-tRNA-ligase_SC_fold"/>
</dbReference>
<dbReference type="InterPro" id="IPR014729">
    <property type="entry name" value="Rossmann-like_a/b/a_fold"/>
</dbReference>
<dbReference type="NCBIfam" id="TIGR00467">
    <property type="entry name" value="lysS_arch"/>
    <property type="match status" value="1"/>
</dbReference>
<dbReference type="PANTHER" id="PTHR37940">
    <property type="entry name" value="LYSINE--TRNA LIGASE"/>
    <property type="match status" value="1"/>
</dbReference>
<dbReference type="PANTHER" id="PTHR37940:SF1">
    <property type="entry name" value="LYSINE--TRNA LIGASE"/>
    <property type="match status" value="1"/>
</dbReference>
<dbReference type="Pfam" id="PF01921">
    <property type="entry name" value="tRNA-synt_1f"/>
    <property type="match status" value="1"/>
</dbReference>
<dbReference type="SUPFAM" id="SSF48163">
    <property type="entry name" value="An anticodon-binding domain of class I aminoacyl-tRNA synthetases"/>
    <property type="match status" value="1"/>
</dbReference>
<dbReference type="SUPFAM" id="SSF52374">
    <property type="entry name" value="Nucleotidylyl transferase"/>
    <property type="match status" value="1"/>
</dbReference>
<dbReference type="PROSITE" id="PS00178">
    <property type="entry name" value="AA_TRNA_LIGASE_I"/>
    <property type="match status" value="1"/>
</dbReference>
<sequence length="545" mass="61356">MAEDPYEVGRGVSRAFWADSVADAIEARDPDEPIVIKGGVSPSGVPHIGHFNEIMRGYYVAEALRDRGHEVRQVFTADDKDRLRAVPRQLADLDWNVVGLGEVDAGALGRNLGKPYTDIPDPFGCCDSYGAHFTALLQKSAELVGVDVEFVSNTELYADGEFEAVTRRVLERADRARDVLAEYQNKVDDDYVPFLPQCAECGKITEGVTAVDLDAGEVEYVCEDVEAGDQTIDGCGHEGTATLRDGKLPWRFEWPAQWEILGVDFEPFGKDHAEGSWPSGEDVAENVLDIQPPVPMVYEWFTLDGEPLSSSSGNVITVDEVLDILEPEVFKYFFVKDPRKQRDFSVENIDQLVDEFDRFERRYFEEIEASEDDAELAERAYPMVVDDPREQRIRIPYTFAAVLGMTDDPALREQIARKEGHIPDDAPEWAVEQALARVERAQEWASLTNNEFNYELKRAEIPEVSFDDATAAALDELADFIAEGHDGEAIQSEIYETAKRNDIDISEFFSAGYRLLFDDTEGPQLGTFIAKLDREFVVERFRRNE</sequence>
<feature type="chain" id="PRO_0000152749" description="Lysine--tRNA ligase">
    <location>
        <begin position="1"/>
        <end position="545"/>
    </location>
</feature>
<feature type="short sequence motif" description="'HIGH' region">
    <location>
        <begin position="42"/>
        <end position="50"/>
    </location>
</feature>
<feature type="short sequence motif" description="'KMSKS' region">
    <location>
        <begin position="307"/>
        <end position="311"/>
    </location>
</feature>
<organism>
    <name type="scientific">Haloarcula marismortui (strain ATCC 43049 / DSM 3752 / JCM 8966 / VKM B-1809)</name>
    <name type="common">Halobacterium marismortui</name>
    <dbReference type="NCBI Taxonomy" id="272569"/>
    <lineage>
        <taxon>Archaea</taxon>
        <taxon>Methanobacteriati</taxon>
        <taxon>Methanobacteriota</taxon>
        <taxon>Stenosarchaea group</taxon>
        <taxon>Halobacteria</taxon>
        <taxon>Halobacteriales</taxon>
        <taxon>Haloarculaceae</taxon>
        <taxon>Haloarcula</taxon>
    </lineage>
</organism>
<protein>
    <recommendedName>
        <fullName evidence="1">Lysine--tRNA ligase</fullName>
        <ecNumber evidence="1">6.1.1.6</ecNumber>
    </recommendedName>
    <alternativeName>
        <fullName evidence="1">Lysyl-tRNA synthetase</fullName>
        <shortName evidence="1">LysRS</shortName>
    </alternativeName>
</protein>
<gene>
    <name evidence="1" type="primary">lysS</name>
    <name type="ordered locus">rrnAC3173</name>
</gene>
<name>SYK_HALMA</name>
<reference key="1">
    <citation type="journal article" date="2004" name="Genome Res.">
        <title>Genome sequence of Haloarcula marismortui: a halophilic archaeon from the Dead Sea.</title>
        <authorList>
            <person name="Baliga N.S."/>
            <person name="Bonneau R."/>
            <person name="Facciotti M.T."/>
            <person name="Pan M."/>
            <person name="Glusman G."/>
            <person name="Deutsch E.W."/>
            <person name="Shannon P."/>
            <person name="Chiu Y."/>
            <person name="Weng R.S."/>
            <person name="Gan R.R."/>
            <person name="Hung P."/>
            <person name="Date S.V."/>
            <person name="Marcotte E."/>
            <person name="Hood L."/>
            <person name="Ng W.V."/>
        </authorList>
    </citation>
    <scope>NUCLEOTIDE SEQUENCE [LARGE SCALE GENOMIC DNA]</scope>
    <source>
        <strain>ATCC 43049 / DSM 3752 / JCM 8966 / VKM B-1809</strain>
    </source>
</reference>